<sequence length="441" mass="48902">LLLLGHASTSTRGFSGNSFKSDLIPQSRRSHSVYGTPGSIRISSPSVPSAIVSSYSSTLSSALPSSSYGGNSFSSSTSFSSGGSDLLLGTSGKEAMQNLNDRLASYLDKVRSLEGKNHELELKIKDWYSQVIPGTGGPDARDYGHLEKEIEDLQNKVNNCRVDTATILLHIDNAKLAADDFRNKYENEQSLRLGVEADINGLKRVLDELALAKADTDMQIEGLRDELDYLKKNHEEDMKAASSGIAGQVNVELDAAPGTNLLDELDACRRDHEAMLDQMRREAERWYNEKAKDVKDKAGEAQETLVSHTSEISDLKRSIQSLEIELQTQLARKSSLESTLAGTESQYGMRIQEIQMKINVFEDQISDLRAKMEFQSQEYQMLLDVKQRLEAEIATYRMLLDSEDSKGSIINHKILTAIEKLVDGIVLSTEVLEKQIPVLSY</sequence>
<organism>
    <name type="scientific">Protopterus aethiopicus</name>
    <name type="common">Marbled lungfish</name>
    <dbReference type="NCBI Taxonomy" id="7886"/>
    <lineage>
        <taxon>Eukaryota</taxon>
        <taxon>Metazoa</taxon>
        <taxon>Chordata</taxon>
        <taxon>Craniata</taxon>
        <taxon>Vertebrata</taxon>
        <taxon>Euteleostomi</taxon>
        <taxon>Dipnomorpha</taxon>
        <taxon>Ceratodontiformes</taxon>
        <taxon>Lepidosirenoidei</taxon>
        <taxon>Protopteridae</taxon>
        <taxon>Protopterus</taxon>
    </lineage>
</organism>
<gene>
    <name type="primary">KRT15</name>
</gene>
<name>K1C15_PROAT</name>
<protein>
    <recommendedName>
        <fullName>Keratin, type I cytoskeletal 15</fullName>
    </recommendedName>
    <alternativeName>
        <fullName>Cytokeratin-15</fullName>
        <shortName>CK-15</shortName>
    </alternativeName>
    <alternativeName>
        <fullName>Keratin-15</fullName>
        <shortName>K15</shortName>
    </alternativeName>
</protein>
<dbReference type="EMBL" id="AJ785789">
    <property type="protein sequence ID" value="CAH05045.1"/>
    <property type="molecule type" value="mRNA"/>
</dbReference>
<dbReference type="SMR" id="Q5K2P2"/>
<dbReference type="GO" id="GO:0005882">
    <property type="term" value="C:intermediate filament"/>
    <property type="evidence" value="ECO:0007669"/>
    <property type="project" value="UniProtKB-KW"/>
</dbReference>
<dbReference type="GO" id="GO:0005198">
    <property type="term" value="F:structural molecule activity"/>
    <property type="evidence" value="ECO:0007669"/>
    <property type="project" value="InterPro"/>
</dbReference>
<dbReference type="FunFam" id="1.20.5.170:FF:000002">
    <property type="entry name" value="Type I keratin KA11"/>
    <property type="match status" value="1"/>
</dbReference>
<dbReference type="Gene3D" id="1.20.5.170">
    <property type="match status" value="1"/>
</dbReference>
<dbReference type="Gene3D" id="1.20.5.500">
    <property type="entry name" value="Single helix bin"/>
    <property type="match status" value="1"/>
</dbReference>
<dbReference type="Gene3D" id="1.20.5.1160">
    <property type="entry name" value="Vasodilator-stimulated phosphoprotein"/>
    <property type="match status" value="1"/>
</dbReference>
<dbReference type="InterPro" id="IPR018039">
    <property type="entry name" value="IF_conserved"/>
</dbReference>
<dbReference type="InterPro" id="IPR039008">
    <property type="entry name" value="IF_rod_dom"/>
</dbReference>
<dbReference type="InterPro" id="IPR002957">
    <property type="entry name" value="Keratin_I"/>
</dbReference>
<dbReference type="PANTHER" id="PTHR23239">
    <property type="entry name" value="INTERMEDIATE FILAMENT"/>
    <property type="match status" value="1"/>
</dbReference>
<dbReference type="PANTHER" id="PTHR23239:SF180">
    <property type="entry name" value="KERATIN, TYPE I CYTOSKELETAL 17"/>
    <property type="match status" value="1"/>
</dbReference>
<dbReference type="Pfam" id="PF00038">
    <property type="entry name" value="Filament"/>
    <property type="match status" value="1"/>
</dbReference>
<dbReference type="PRINTS" id="PR01248">
    <property type="entry name" value="TYPE1KERATIN"/>
</dbReference>
<dbReference type="SMART" id="SM01391">
    <property type="entry name" value="Filament"/>
    <property type="match status" value="1"/>
</dbReference>
<dbReference type="SUPFAM" id="SSF64593">
    <property type="entry name" value="Intermediate filament protein, coiled coil region"/>
    <property type="match status" value="2"/>
</dbReference>
<dbReference type="PROSITE" id="PS00226">
    <property type="entry name" value="IF_ROD_1"/>
    <property type="match status" value="1"/>
</dbReference>
<dbReference type="PROSITE" id="PS51842">
    <property type="entry name" value="IF_ROD_2"/>
    <property type="match status" value="1"/>
</dbReference>
<keyword id="KW-0175">Coiled coil</keyword>
<keyword id="KW-0403">Intermediate filament</keyword>
<keyword id="KW-0416">Keratin</keyword>
<feature type="chain" id="PRO_0000063661" description="Keratin, type I cytoskeletal 15">
    <location>
        <begin position="1" status="less than"/>
        <end position="441"/>
    </location>
</feature>
<feature type="domain" description="IF rod" evidence="2">
    <location>
        <begin position="92"/>
        <end position="407"/>
    </location>
</feature>
<feature type="region of interest" description="Head" evidence="1">
    <location>
        <begin position="2"/>
        <end position="91"/>
    </location>
</feature>
<feature type="region of interest" description="Coil 1A" evidence="1">
    <location>
        <begin position="92"/>
        <end position="127"/>
    </location>
</feature>
<feature type="region of interest" description="Linker 1" evidence="1">
    <location>
        <begin position="128"/>
        <end position="149"/>
    </location>
</feature>
<feature type="region of interest" description="Coil 1B" evidence="1">
    <location>
        <begin position="150"/>
        <end position="241"/>
    </location>
</feature>
<feature type="region of interest" description="Linker 12" evidence="1">
    <location>
        <begin position="242"/>
        <end position="261"/>
    </location>
</feature>
<feature type="region of interest" description="Coil 2" evidence="1">
    <location>
        <begin position="262"/>
        <end position="403"/>
    </location>
</feature>
<feature type="region of interest" description="Tail" evidence="1">
    <location>
        <begin position="404"/>
        <end position="441"/>
    </location>
</feature>
<feature type="non-terminal residue" evidence="5">
    <location>
        <position position="1"/>
    </location>
</feature>
<accession>Q5K2P2</accession>
<comment type="subunit">
    <text evidence="4">Heterotetramer of two type I and two type II keratins.</text>
</comment>
<comment type="tissue specificity">
    <text evidence="3">Expressed in skin.</text>
</comment>
<comment type="miscellaneous">
    <text>There are two types of cytoskeletal and microfibrillar keratin: I (acidic; 40-55 kDa) and II (neutral to basic; 56-70 kDa).</text>
</comment>
<comment type="similarity">
    <text evidence="2">Belongs to the intermediate filament family.</text>
</comment>
<reference evidence="4 5" key="1">
    <citation type="journal article" date="2005" name="Eur. J. Cell Biol.">
        <title>Evolution of tissue-specific keratins as deduced from novel cDNA sequences of the lungfish Protopterus aethiopicus.</title>
        <authorList>
            <person name="Schaffeld M."/>
            <person name="Bremer M."/>
            <person name="Hunzinger C."/>
            <person name="Markl J."/>
        </authorList>
    </citation>
    <scope>NUCLEOTIDE SEQUENCE [MRNA]</scope>
    <scope>TISSUE SPECIFICITY</scope>
    <scope>IDENTIFICATION BY MASS SPECTROMETRY</scope>
    <source>
        <tissue evidence="3">Skin</tissue>
    </source>
</reference>
<evidence type="ECO:0000255" key="1"/>
<evidence type="ECO:0000255" key="2">
    <source>
        <dbReference type="PROSITE-ProRule" id="PRU01188"/>
    </source>
</evidence>
<evidence type="ECO:0000269" key="3">
    <source>
    </source>
</evidence>
<evidence type="ECO:0000305" key="4"/>
<evidence type="ECO:0000312" key="5">
    <source>
        <dbReference type="EMBL" id="CAH05045.1"/>
    </source>
</evidence>
<proteinExistence type="evidence at protein level"/>